<evidence type="ECO:0000250" key="1"/>
<evidence type="ECO:0000250" key="2">
    <source>
        <dbReference type="UniProtKB" id="Q08AH1"/>
    </source>
</evidence>
<evidence type="ECO:0000250" key="3">
    <source>
        <dbReference type="UniProtKB" id="Q8BGA8"/>
    </source>
</evidence>
<evidence type="ECO:0000250" key="4">
    <source>
        <dbReference type="UniProtKB" id="Q91VA0"/>
    </source>
</evidence>
<evidence type="ECO:0000255" key="5"/>
<evidence type="ECO:0000305" key="6"/>
<feature type="transit peptide" description="Mitochondrion" evidence="5">
    <location>
        <begin position="1"/>
        <end position="22"/>
    </location>
</feature>
<feature type="chain" id="PRO_0000306103" description="Acyl-coenzyme A synthetase ACSM5, mitochondrial">
    <location>
        <begin position="23"/>
        <end position="578"/>
    </location>
</feature>
<feature type="binding site" evidence="1">
    <location>
        <begin position="229"/>
        <end position="237"/>
    </location>
    <ligand>
        <name>ATP</name>
        <dbReference type="ChEBI" id="CHEBI:30616"/>
    </ligand>
</feature>
<feature type="binding site" evidence="1">
    <location>
        <begin position="367"/>
        <end position="372"/>
    </location>
    <ligand>
        <name>ATP</name>
        <dbReference type="ChEBI" id="CHEBI:30616"/>
    </ligand>
</feature>
<feature type="binding site" evidence="1">
    <location>
        <position position="454"/>
    </location>
    <ligand>
        <name>ATP</name>
        <dbReference type="ChEBI" id="CHEBI:30616"/>
    </ligand>
</feature>
<feature type="binding site" evidence="1">
    <location>
        <position position="469"/>
    </location>
    <ligand>
        <name>ATP</name>
        <dbReference type="ChEBI" id="CHEBI:30616"/>
    </ligand>
</feature>
<feature type="binding site" evidence="1">
    <location>
        <position position="565"/>
    </location>
    <ligand>
        <name>ATP</name>
        <dbReference type="ChEBI" id="CHEBI:30616"/>
    </ligand>
</feature>
<feature type="modified residue" description="N6-acetyllysine; alternate" evidence="3">
    <location>
        <position position="96"/>
    </location>
</feature>
<feature type="modified residue" description="N6-succinyllysine; alternate" evidence="3">
    <location>
        <position position="96"/>
    </location>
</feature>
<feature type="modified residue" description="N6-acetyllysine" evidence="3">
    <location>
        <position position="151"/>
    </location>
</feature>
<feature type="modified residue" description="N6-acetyllysine" evidence="3">
    <location>
        <position position="335"/>
    </location>
</feature>
<dbReference type="EC" id="6.2.1.2" evidence="2"/>
<dbReference type="EMBL" id="BC078915">
    <property type="protein sequence ID" value="AAH78915.1"/>
    <property type="molecule type" value="mRNA"/>
</dbReference>
<dbReference type="RefSeq" id="NP_001014184.3">
    <property type="nucleotide sequence ID" value="NM_001014162.5"/>
</dbReference>
<dbReference type="RefSeq" id="XP_006230185.1">
    <property type="nucleotide sequence ID" value="XM_006230123.3"/>
</dbReference>
<dbReference type="RefSeq" id="XP_006230188.1">
    <property type="nucleotide sequence ID" value="XM_006230126.2"/>
</dbReference>
<dbReference type="RefSeq" id="XP_017444881.1">
    <property type="nucleotide sequence ID" value="XM_017589392.1"/>
</dbReference>
<dbReference type="RefSeq" id="XP_038938781.1">
    <property type="nucleotide sequence ID" value="XM_039082853.2"/>
</dbReference>
<dbReference type="SMR" id="Q6AYT9"/>
<dbReference type="FunCoup" id="Q6AYT9">
    <property type="interactions" value="27"/>
</dbReference>
<dbReference type="STRING" id="10116.ENSRNOP00000043828"/>
<dbReference type="iPTMnet" id="Q6AYT9"/>
<dbReference type="PhosphoSitePlus" id="Q6AYT9"/>
<dbReference type="PaxDb" id="10116-ENSRNOP00000043828"/>
<dbReference type="Ensembl" id="ENSRNOT00000046025.5">
    <property type="protein sequence ID" value="ENSRNOP00000047613.3"/>
    <property type="gene ID" value="ENSRNOG00000031211.7"/>
</dbReference>
<dbReference type="GeneID" id="361637"/>
<dbReference type="KEGG" id="rno:361637"/>
<dbReference type="UCSC" id="RGD:1309578">
    <property type="organism name" value="rat"/>
</dbReference>
<dbReference type="AGR" id="RGD:1309578"/>
<dbReference type="CTD" id="54988"/>
<dbReference type="RGD" id="1309578">
    <property type="gene designation" value="Acsm5"/>
</dbReference>
<dbReference type="eggNOG" id="KOG1175">
    <property type="taxonomic scope" value="Eukaryota"/>
</dbReference>
<dbReference type="GeneTree" id="ENSGT00940000161148"/>
<dbReference type="HOGENOM" id="CLU_000022_59_10_1"/>
<dbReference type="InParanoid" id="Q6AYT9"/>
<dbReference type="Reactome" id="R-RNO-177128">
    <property type="pathway name" value="Conjugation of salicylate with glycine"/>
</dbReference>
<dbReference type="Reactome" id="R-RNO-9749641">
    <property type="pathway name" value="Aspirin ADME"/>
</dbReference>
<dbReference type="PRO" id="PR:Q6AYT9"/>
<dbReference type="Proteomes" id="UP000002494">
    <property type="component" value="Chromosome 1"/>
</dbReference>
<dbReference type="Bgee" id="ENSRNOG00000031211">
    <property type="expression patterns" value="Expressed in liver and 11 other cell types or tissues"/>
</dbReference>
<dbReference type="ExpressionAtlas" id="Q6AYT9">
    <property type="expression patterns" value="baseline and differential"/>
</dbReference>
<dbReference type="GO" id="GO:0005759">
    <property type="term" value="C:mitochondrial matrix"/>
    <property type="evidence" value="ECO:0000318"/>
    <property type="project" value="GO_Central"/>
</dbReference>
<dbReference type="GO" id="GO:0005524">
    <property type="term" value="F:ATP binding"/>
    <property type="evidence" value="ECO:0007669"/>
    <property type="project" value="UniProtKB-KW"/>
</dbReference>
<dbReference type="GO" id="GO:0015645">
    <property type="term" value="F:fatty acid ligase activity"/>
    <property type="evidence" value="ECO:0000318"/>
    <property type="project" value="GO_Central"/>
</dbReference>
<dbReference type="GO" id="GO:0004321">
    <property type="term" value="F:fatty-acyl-CoA synthase activity"/>
    <property type="evidence" value="ECO:0000318"/>
    <property type="project" value="GO_Central"/>
</dbReference>
<dbReference type="GO" id="GO:0005525">
    <property type="term" value="F:GTP binding"/>
    <property type="evidence" value="ECO:0007669"/>
    <property type="project" value="UniProtKB-KW"/>
</dbReference>
<dbReference type="GO" id="GO:0031956">
    <property type="term" value="F:medium-chain fatty acid-CoA ligase activity"/>
    <property type="evidence" value="ECO:0007669"/>
    <property type="project" value="UniProtKB-EC"/>
</dbReference>
<dbReference type="GO" id="GO:0046872">
    <property type="term" value="F:metal ion binding"/>
    <property type="evidence" value="ECO:0007669"/>
    <property type="project" value="UniProtKB-KW"/>
</dbReference>
<dbReference type="GO" id="GO:0006637">
    <property type="term" value="P:acyl-CoA metabolic process"/>
    <property type="evidence" value="ECO:0000318"/>
    <property type="project" value="GO_Central"/>
</dbReference>
<dbReference type="GO" id="GO:0006633">
    <property type="term" value="P:fatty acid biosynthetic process"/>
    <property type="evidence" value="ECO:0000318"/>
    <property type="project" value="GO_Central"/>
</dbReference>
<dbReference type="FunFam" id="3.40.50.12780:FF:000007">
    <property type="entry name" value="Acyl-coenzyme A synthetase ACSM2A, mitochondrial"/>
    <property type="match status" value="1"/>
</dbReference>
<dbReference type="FunFam" id="3.30.300.30:FF:000005">
    <property type="entry name" value="Acyl-coenzyme A synthetase ACSM5, mitochondrial"/>
    <property type="match status" value="1"/>
</dbReference>
<dbReference type="Gene3D" id="3.30.300.30">
    <property type="match status" value="1"/>
</dbReference>
<dbReference type="Gene3D" id="3.40.50.12780">
    <property type="entry name" value="N-terminal domain of ligase-like"/>
    <property type="match status" value="1"/>
</dbReference>
<dbReference type="InterPro" id="IPR025110">
    <property type="entry name" value="AMP-bd_C"/>
</dbReference>
<dbReference type="InterPro" id="IPR045851">
    <property type="entry name" value="AMP-bd_C_sf"/>
</dbReference>
<dbReference type="InterPro" id="IPR020845">
    <property type="entry name" value="AMP-binding_CS"/>
</dbReference>
<dbReference type="InterPro" id="IPR000873">
    <property type="entry name" value="AMP-dep_synth/lig_dom"/>
</dbReference>
<dbReference type="InterPro" id="IPR042099">
    <property type="entry name" value="ANL_N_sf"/>
</dbReference>
<dbReference type="InterPro" id="IPR051087">
    <property type="entry name" value="Mitochondrial_ACSM"/>
</dbReference>
<dbReference type="PANTHER" id="PTHR43605">
    <property type="entry name" value="ACYL-COENZYME A SYNTHETASE"/>
    <property type="match status" value="1"/>
</dbReference>
<dbReference type="PANTHER" id="PTHR43605:SF6">
    <property type="entry name" value="ACYL-COENZYME A SYNTHETASE ACSM5, MITOCHONDRIAL"/>
    <property type="match status" value="1"/>
</dbReference>
<dbReference type="Pfam" id="PF00501">
    <property type="entry name" value="AMP-binding"/>
    <property type="match status" value="1"/>
</dbReference>
<dbReference type="Pfam" id="PF13193">
    <property type="entry name" value="AMP-binding_C"/>
    <property type="match status" value="1"/>
</dbReference>
<dbReference type="SUPFAM" id="SSF56801">
    <property type="entry name" value="Acetyl-CoA synthetase-like"/>
    <property type="match status" value="1"/>
</dbReference>
<dbReference type="PROSITE" id="PS00455">
    <property type="entry name" value="AMP_BINDING"/>
    <property type="match status" value="1"/>
</dbReference>
<gene>
    <name type="primary">Acsm5</name>
    <name type="synonym">Macs3</name>
</gene>
<comment type="function">
    <text evidence="2">Catalyzes the activation of fatty acids by CoA to produce an acyl-CoA, the first step in fatty acid metabolism.</text>
</comment>
<comment type="catalytic activity">
    <reaction evidence="2">
        <text>a medium-chain fatty acid + ATP + CoA = a medium-chain fatty acyl-CoA + AMP + diphosphate</text>
        <dbReference type="Rhea" id="RHEA:48340"/>
        <dbReference type="ChEBI" id="CHEBI:30616"/>
        <dbReference type="ChEBI" id="CHEBI:33019"/>
        <dbReference type="ChEBI" id="CHEBI:57287"/>
        <dbReference type="ChEBI" id="CHEBI:59558"/>
        <dbReference type="ChEBI" id="CHEBI:90546"/>
        <dbReference type="ChEBI" id="CHEBI:456215"/>
        <dbReference type="EC" id="6.2.1.2"/>
    </reaction>
    <physiologicalReaction direction="left-to-right" evidence="2">
        <dbReference type="Rhea" id="RHEA:48341"/>
    </physiologicalReaction>
</comment>
<comment type="cofactor">
    <cofactor evidence="2">
        <name>Mg(2+)</name>
        <dbReference type="ChEBI" id="CHEBI:18420"/>
    </cofactor>
    <cofactor evidence="2">
        <name>Mn(2+)</name>
        <dbReference type="ChEBI" id="CHEBI:29035"/>
    </cofactor>
</comment>
<comment type="subcellular location">
    <subcellularLocation>
        <location evidence="4">Mitochondrion matrix</location>
    </subcellularLocation>
</comment>
<comment type="similarity">
    <text evidence="6">Belongs to the ATP-dependent AMP-binding enzyme family.</text>
</comment>
<sequence length="578" mass="64623">MRLWLRGLVYQARRSSWGVFRIHTQPPPPPIPEVVATWEAISLGKRPVPEYFNFAHDVLDVWSQLEKTGHRPPNPAFWWVNGSGTEVKWTFEELGKQSRKAANILEGACGLKPGDRLMLVLPRLPEWWLTIVACMRTGVVMIPGISQLTQKDLKYRLQAARVKSIITSDALAPHVDAISADCPSLQSRLLVSDTSRPGWINFRELLRVASPEHNCLRTRSGDSMAIYFTSGTTGTPKMVEHSQCSYGLGFVASGRRLMALTESDIFWNTTDTGWVKAAWTLFSAWANGACVFVHELPQVDAQTILNTLCRFPITTICCVPTLFRLLVQEDLTRYKFQCLRHCLAGGEALNSDVRDKWKNQTGLEIHEGYGQSETVLICGNFRGSTIKSGSMGKASPPYDVQIVDEEGNVLPPGKEGNIAIRIKPTRPFCLFNCYLDNPEKTAASEQGDFYITGDRAHMDEDGYFWFVGRNDDVINSSSYRIGPVEVESALAEHPAVLESAVVSSPDPIRGEVVKAFIVLSPAYVSHDPEALTRELQEHVKTVTAPYKYPRKVAFISELPKTVSGKILRSKLRNQEWGR</sequence>
<keyword id="KW-0007">Acetylation</keyword>
<keyword id="KW-0067">ATP-binding</keyword>
<keyword id="KW-0276">Fatty acid metabolism</keyword>
<keyword id="KW-0342">GTP-binding</keyword>
<keyword id="KW-0436">Ligase</keyword>
<keyword id="KW-0443">Lipid metabolism</keyword>
<keyword id="KW-0460">Magnesium</keyword>
<keyword id="KW-0479">Metal-binding</keyword>
<keyword id="KW-0496">Mitochondrion</keyword>
<keyword id="KW-0547">Nucleotide-binding</keyword>
<keyword id="KW-1185">Reference proteome</keyword>
<keyword id="KW-0809">Transit peptide</keyword>
<proteinExistence type="evidence at transcript level"/>
<accession>Q6AYT9</accession>
<organism>
    <name type="scientific">Rattus norvegicus</name>
    <name type="common">Rat</name>
    <dbReference type="NCBI Taxonomy" id="10116"/>
    <lineage>
        <taxon>Eukaryota</taxon>
        <taxon>Metazoa</taxon>
        <taxon>Chordata</taxon>
        <taxon>Craniata</taxon>
        <taxon>Vertebrata</taxon>
        <taxon>Euteleostomi</taxon>
        <taxon>Mammalia</taxon>
        <taxon>Eutheria</taxon>
        <taxon>Euarchontoglires</taxon>
        <taxon>Glires</taxon>
        <taxon>Rodentia</taxon>
        <taxon>Myomorpha</taxon>
        <taxon>Muroidea</taxon>
        <taxon>Muridae</taxon>
        <taxon>Murinae</taxon>
        <taxon>Rattus</taxon>
    </lineage>
</organism>
<protein>
    <recommendedName>
        <fullName>Acyl-coenzyme A synthetase ACSM5, mitochondrial</fullName>
        <ecNumber evidence="2">6.2.1.2</ecNumber>
    </recommendedName>
</protein>
<name>ACSM5_RAT</name>
<reference key="1">
    <citation type="journal article" date="2004" name="Genome Res.">
        <title>The status, quality, and expansion of the NIH full-length cDNA project: the Mammalian Gene Collection (MGC).</title>
        <authorList>
            <consortium name="The MGC Project Team"/>
        </authorList>
    </citation>
    <scope>NUCLEOTIDE SEQUENCE [LARGE SCALE MRNA]</scope>
    <source>
        <tissue>Lung</tissue>
    </source>
</reference>